<dbReference type="EMBL" id="CP000352">
    <property type="protein sequence ID" value="ABF09287.1"/>
    <property type="molecule type" value="Genomic_DNA"/>
</dbReference>
<dbReference type="RefSeq" id="WP_011517006.1">
    <property type="nucleotide sequence ID" value="NC_007973.1"/>
</dbReference>
<dbReference type="SMR" id="Q1LKN9"/>
<dbReference type="STRING" id="266264.Rmet_2410"/>
<dbReference type="KEGG" id="rme:Rmet_2410"/>
<dbReference type="eggNOG" id="COG0322">
    <property type="taxonomic scope" value="Bacteria"/>
</dbReference>
<dbReference type="HOGENOM" id="CLU_014841_3_0_4"/>
<dbReference type="Proteomes" id="UP000002429">
    <property type="component" value="Chromosome"/>
</dbReference>
<dbReference type="GO" id="GO:0005737">
    <property type="term" value="C:cytoplasm"/>
    <property type="evidence" value="ECO:0007669"/>
    <property type="project" value="UniProtKB-SubCell"/>
</dbReference>
<dbReference type="GO" id="GO:0009380">
    <property type="term" value="C:excinuclease repair complex"/>
    <property type="evidence" value="ECO:0007669"/>
    <property type="project" value="InterPro"/>
</dbReference>
<dbReference type="GO" id="GO:0003677">
    <property type="term" value="F:DNA binding"/>
    <property type="evidence" value="ECO:0007669"/>
    <property type="project" value="UniProtKB-UniRule"/>
</dbReference>
<dbReference type="GO" id="GO:0009381">
    <property type="term" value="F:excinuclease ABC activity"/>
    <property type="evidence" value="ECO:0007669"/>
    <property type="project" value="UniProtKB-UniRule"/>
</dbReference>
<dbReference type="GO" id="GO:0006289">
    <property type="term" value="P:nucleotide-excision repair"/>
    <property type="evidence" value="ECO:0007669"/>
    <property type="project" value="UniProtKB-UniRule"/>
</dbReference>
<dbReference type="GO" id="GO:0009432">
    <property type="term" value="P:SOS response"/>
    <property type="evidence" value="ECO:0007669"/>
    <property type="project" value="UniProtKB-UniRule"/>
</dbReference>
<dbReference type="CDD" id="cd10434">
    <property type="entry name" value="GIY-YIG_UvrC_Cho"/>
    <property type="match status" value="1"/>
</dbReference>
<dbReference type="FunFam" id="3.30.420.340:FF:000001">
    <property type="entry name" value="UvrABC system protein C"/>
    <property type="match status" value="1"/>
</dbReference>
<dbReference type="FunFam" id="3.40.1440.10:FF:000001">
    <property type="entry name" value="UvrABC system protein C"/>
    <property type="match status" value="1"/>
</dbReference>
<dbReference type="Gene3D" id="1.10.150.20">
    <property type="entry name" value="5' to 3' exonuclease, C-terminal subdomain"/>
    <property type="match status" value="1"/>
</dbReference>
<dbReference type="Gene3D" id="3.40.1440.10">
    <property type="entry name" value="GIY-YIG endonuclease"/>
    <property type="match status" value="1"/>
</dbReference>
<dbReference type="Gene3D" id="4.10.860.10">
    <property type="entry name" value="UVR domain"/>
    <property type="match status" value="1"/>
</dbReference>
<dbReference type="Gene3D" id="3.30.420.340">
    <property type="entry name" value="UvrC, RNAse H endonuclease domain"/>
    <property type="match status" value="1"/>
</dbReference>
<dbReference type="HAMAP" id="MF_00203">
    <property type="entry name" value="UvrC"/>
    <property type="match status" value="1"/>
</dbReference>
<dbReference type="InterPro" id="IPR000305">
    <property type="entry name" value="GIY-YIG_endonuc"/>
</dbReference>
<dbReference type="InterPro" id="IPR035901">
    <property type="entry name" value="GIY-YIG_endonuc_sf"/>
</dbReference>
<dbReference type="InterPro" id="IPR047296">
    <property type="entry name" value="GIY-YIG_UvrC_Cho"/>
</dbReference>
<dbReference type="InterPro" id="IPR010994">
    <property type="entry name" value="RuvA_2-like"/>
</dbReference>
<dbReference type="InterPro" id="IPR001943">
    <property type="entry name" value="UVR_dom"/>
</dbReference>
<dbReference type="InterPro" id="IPR036876">
    <property type="entry name" value="UVR_dom_sf"/>
</dbReference>
<dbReference type="InterPro" id="IPR050066">
    <property type="entry name" value="UvrABC_protein_C"/>
</dbReference>
<dbReference type="InterPro" id="IPR004791">
    <property type="entry name" value="UvrC"/>
</dbReference>
<dbReference type="InterPro" id="IPR001162">
    <property type="entry name" value="UvrC_RNase_H_dom"/>
</dbReference>
<dbReference type="InterPro" id="IPR038476">
    <property type="entry name" value="UvrC_RNase_H_dom_sf"/>
</dbReference>
<dbReference type="NCBIfam" id="NF001824">
    <property type="entry name" value="PRK00558.1-5"/>
    <property type="match status" value="1"/>
</dbReference>
<dbReference type="NCBIfam" id="TIGR00194">
    <property type="entry name" value="uvrC"/>
    <property type="match status" value="1"/>
</dbReference>
<dbReference type="PANTHER" id="PTHR30562:SF1">
    <property type="entry name" value="UVRABC SYSTEM PROTEIN C"/>
    <property type="match status" value="1"/>
</dbReference>
<dbReference type="PANTHER" id="PTHR30562">
    <property type="entry name" value="UVRC/OXIDOREDUCTASE"/>
    <property type="match status" value="1"/>
</dbReference>
<dbReference type="Pfam" id="PF01541">
    <property type="entry name" value="GIY-YIG"/>
    <property type="match status" value="1"/>
</dbReference>
<dbReference type="Pfam" id="PF14520">
    <property type="entry name" value="HHH_5"/>
    <property type="match status" value="1"/>
</dbReference>
<dbReference type="Pfam" id="PF02151">
    <property type="entry name" value="UVR"/>
    <property type="match status" value="1"/>
</dbReference>
<dbReference type="Pfam" id="PF22920">
    <property type="entry name" value="UvrC_RNaseH"/>
    <property type="match status" value="1"/>
</dbReference>
<dbReference type="Pfam" id="PF08459">
    <property type="entry name" value="UvrC_RNaseH_dom"/>
    <property type="match status" value="1"/>
</dbReference>
<dbReference type="SMART" id="SM00465">
    <property type="entry name" value="GIYc"/>
    <property type="match status" value="1"/>
</dbReference>
<dbReference type="SUPFAM" id="SSF46600">
    <property type="entry name" value="C-terminal UvrC-binding domain of UvrB"/>
    <property type="match status" value="1"/>
</dbReference>
<dbReference type="SUPFAM" id="SSF82771">
    <property type="entry name" value="GIY-YIG endonuclease"/>
    <property type="match status" value="1"/>
</dbReference>
<dbReference type="SUPFAM" id="SSF47781">
    <property type="entry name" value="RuvA domain 2-like"/>
    <property type="match status" value="1"/>
</dbReference>
<dbReference type="PROSITE" id="PS50164">
    <property type="entry name" value="GIY_YIG"/>
    <property type="match status" value="1"/>
</dbReference>
<dbReference type="PROSITE" id="PS50151">
    <property type="entry name" value="UVR"/>
    <property type="match status" value="1"/>
</dbReference>
<dbReference type="PROSITE" id="PS50165">
    <property type="entry name" value="UVRC"/>
    <property type="match status" value="1"/>
</dbReference>
<proteinExistence type="inferred from homology"/>
<reference key="1">
    <citation type="journal article" date="2010" name="PLoS ONE">
        <title>The complete genome sequence of Cupriavidus metallidurans strain CH34, a master survivalist in harsh and anthropogenic environments.</title>
        <authorList>
            <person name="Janssen P.J."/>
            <person name="Van Houdt R."/>
            <person name="Moors H."/>
            <person name="Monsieurs P."/>
            <person name="Morin N."/>
            <person name="Michaux A."/>
            <person name="Benotmane M.A."/>
            <person name="Leys N."/>
            <person name="Vallaeys T."/>
            <person name="Lapidus A."/>
            <person name="Monchy S."/>
            <person name="Medigue C."/>
            <person name="Taghavi S."/>
            <person name="McCorkle S."/>
            <person name="Dunn J."/>
            <person name="van der Lelie D."/>
            <person name="Mergeay M."/>
        </authorList>
    </citation>
    <scope>NUCLEOTIDE SEQUENCE [LARGE SCALE GENOMIC DNA]</scope>
    <source>
        <strain>ATCC 43123 / DSM 2839 / NBRC 102507 / CH34</strain>
    </source>
</reference>
<evidence type="ECO:0000255" key="1">
    <source>
        <dbReference type="HAMAP-Rule" id="MF_00203"/>
    </source>
</evidence>
<evidence type="ECO:0000256" key="2">
    <source>
        <dbReference type="SAM" id="MobiDB-lite"/>
    </source>
</evidence>
<feature type="chain" id="PRO_0000264929" description="UvrABC system protein C">
    <location>
        <begin position="1"/>
        <end position="673"/>
    </location>
</feature>
<feature type="domain" description="GIY-YIG" evidence="1">
    <location>
        <begin position="39"/>
        <end position="117"/>
    </location>
</feature>
<feature type="domain" description="UVR" evidence="1">
    <location>
        <begin position="226"/>
        <end position="261"/>
    </location>
</feature>
<feature type="region of interest" description="Disordered" evidence="2">
    <location>
        <begin position="1"/>
        <end position="32"/>
    </location>
</feature>
<feature type="compositionally biased region" description="Low complexity" evidence="2">
    <location>
        <begin position="10"/>
        <end position="23"/>
    </location>
</feature>
<organism>
    <name type="scientific">Cupriavidus metallidurans (strain ATCC 43123 / DSM 2839 / NBRC 102507 / CH34)</name>
    <name type="common">Ralstonia metallidurans</name>
    <dbReference type="NCBI Taxonomy" id="266264"/>
    <lineage>
        <taxon>Bacteria</taxon>
        <taxon>Pseudomonadati</taxon>
        <taxon>Pseudomonadota</taxon>
        <taxon>Betaproteobacteria</taxon>
        <taxon>Burkholderiales</taxon>
        <taxon>Burkholderiaceae</taxon>
        <taxon>Cupriavidus</taxon>
    </lineage>
</organism>
<sequence length="673" mass="74070">MPEQEPVPPTETTSPESDTPESSDAPAFDPRPILARMPGLPGVYRYFDADGNILYVGKARDLKKRVSSYFNKTQLSPRIAMMVAKIARIDTTVVRTEAEALLLENNLIKALAPRYNILFRDDKSYPFLRLTGHKFPRMAYYRGATDRKHQYFGPFPSAHAVRESMQILQKVFQLRTCEDTVFNNRTRPCLLHQIHRCTGPCVGAISEDDYARDVSNAARFLQGRETEVLEGLQSKMEAHAVQLEFEQAAAVRDQIAALSTVLKRQAVEEVGQARDIDILAVAVQGGRACVNLAMVRGGRHLGDKAYFPAHVDEAAMIVEEGDEADGSAHEGAAADTDQLPIDRIAARVLSAFMVQHYLDQAPPPIVVVSHRPADSALVEALSMQAGRKITLVRQPQGQRKTWLEMAAQGAGLALARRLAEQGSQEARTRALAETIGLDLEDLATLRIECFDISHTAGEATQASCVVFHHHEMQNSEYRRYNIADITPGDDYAAMRQVLTRRYQKLVEQLQEAGGDPAGDGGDGVPRMPRVVLIDGGKGQVEVARQVFEELGLDIGLLVGVAKGEGRKVGLETLVFADGRPSLELGQGSAALMLVAQIRDEAHRFAITGMRARRAKARTTSRLEEIEGVGARRRQKLLTRFGGLRGVMAASIDELASVEGISRTLAEEIYRQLH</sequence>
<protein>
    <recommendedName>
        <fullName evidence="1">UvrABC system protein C</fullName>
        <shortName evidence="1">Protein UvrC</shortName>
    </recommendedName>
    <alternativeName>
        <fullName evidence="1">Excinuclease ABC subunit C</fullName>
    </alternativeName>
</protein>
<accession>Q1LKN9</accession>
<comment type="function">
    <text evidence="1">The UvrABC repair system catalyzes the recognition and processing of DNA lesions. UvrC both incises the 5' and 3' sides of the lesion. The N-terminal half is responsible for the 3' incision and the C-terminal half is responsible for the 5' incision.</text>
</comment>
<comment type="subunit">
    <text evidence="1">Interacts with UvrB in an incision complex.</text>
</comment>
<comment type="subcellular location">
    <subcellularLocation>
        <location evidence="1">Cytoplasm</location>
    </subcellularLocation>
</comment>
<comment type="similarity">
    <text evidence="1">Belongs to the UvrC family.</text>
</comment>
<name>UVRC_CUPMC</name>
<gene>
    <name evidence="1" type="primary">uvrC</name>
    <name type="ordered locus">Rmet_2410</name>
</gene>
<keyword id="KW-0963">Cytoplasm</keyword>
<keyword id="KW-0227">DNA damage</keyword>
<keyword id="KW-0228">DNA excision</keyword>
<keyword id="KW-0234">DNA repair</keyword>
<keyword id="KW-0267">Excision nuclease</keyword>
<keyword id="KW-1185">Reference proteome</keyword>
<keyword id="KW-0742">SOS response</keyword>